<dbReference type="EC" id="4.2.1.8" evidence="1"/>
<dbReference type="EMBL" id="CP000510">
    <property type="protein sequence ID" value="ABM02007.1"/>
    <property type="molecule type" value="Genomic_DNA"/>
</dbReference>
<dbReference type="RefSeq" id="WP_011768566.1">
    <property type="nucleotide sequence ID" value="NC_008709.1"/>
</dbReference>
<dbReference type="SMR" id="A1SR92"/>
<dbReference type="STRING" id="357804.Ping_0136"/>
<dbReference type="KEGG" id="pin:Ping_0136"/>
<dbReference type="eggNOG" id="COG1312">
    <property type="taxonomic scope" value="Bacteria"/>
</dbReference>
<dbReference type="HOGENOM" id="CLU_058621_2_0_6"/>
<dbReference type="OrthoDB" id="9780250at2"/>
<dbReference type="UniPathway" id="UPA00246"/>
<dbReference type="Proteomes" id="UP000000639">
    <property type="component" value="Chromosome"/>
</dbReference>
<dbReference type="GO" id="GO:0008198">
    <property type="term" value="F:ferrous iron binding"/>
    <property type="evidence" value="ECO:0007669"/>
    <property type="project" value="TreeGrafter"/>
</dbReference>
<dbReference type="GO" id="GO:0030145">
    <property type="term" value="F:manganese ion binding"/>
    <property type="evidence" value="ECO:0007669"/>
    <property type="project" value="TreeGrafter"/>
</dbReference>
<dbReference type="GO" id="GO:0008927">
    <property type="term" value="F:mannonate dehydratase activity"/>
    <property type="evidence" value="ECO:0007669"/>
    <property type="project" value="UniProtKB-UniRule"/>
</dbReference>
<dbReference type="GO" id="GO:0042840">
    <property type="term" value="P:D-glucuronate catabolic process"/>
    <property type="evidence" value="ECO:0007669"/>
    <property type="project" value="TreeGrafter"/>
</dbReference>
<dbReference type="FunFam" id="3.20.20.150:FF:000010">
    <property type="entry name" value="Mannonate dehydratase"/>
    <property type="match status" value="1"/>
</dbReference>
<dbReference type="Gene3D" id="3.20.20.150">
    <property type="entry name" value="Divalent-metal-dependent TIM barrel enzymes"/>
    <property type="match status" value="1"/>
</dbReference>
<dbReference type="HAMAP" id="MF_00106">
    <property type="entry name" value="UxuA"/>
    <property type="match status" value="1"/>
</dbReference>
<dbReference type="InterPro" id="IPR004628">
    <property type="entry name" value="Man_deHydtase"/>
</dbReference>
<dbReference type="InterPro" id="IPR036237">
    <property type="entry name" value="Xyl_isomerase-like_sf"/>
</dbReference>
<dbReference type="NCBIfam" id="NF003027">
    <property type="entry name" value="PRK03906.1"/>
    <property type="match status" value="1"/>
</dbReference>
<dbReference type="NCBIfam" id="TIGR00695">
    <property type="entry name" value="uxuA"/>
    <property type="match status" value="1"/>
</dbReference>
<dbReference type="PANTHER" id="PTHR30387">
    <property type="entry name" value="MANNONATE DEHYDRATASE"/>
    <property type="match status" value="1"/>
</dbReference>
<dbReference type="PANTHER" id="PTHR30387:SF2">
    <property type="entry name" value="MANNONATE DEHYDRATASE"/>
    <property type="match status" value="1"/>
</dbReference>
<dbReference type="Pfam" id="PF03786">
    <property type="entry name" value="UxuA"/>
    <property type="match status" value="1"/>
</dbReference>
<dbReference type="PIRSF" id="PIRSF016049">
    <property type="entry name" value="Man_dehyd"/>
    <property type="match status" value="1"/>
</dbReference>
<dbReference type="SUPFAM" id="SSF51658">
    <property type="entry name" value="Xylose isomerase-like"/>
    <property type="match status" value="1"/>
</dbReference>
<proteinExistence type="inferred from homology"/>
<protein>
    <recommendedName>
        <fullName evidence="1">Mannonate dehydratase</fullName>
        <ecNumber evidence="1">4.2.1.8</ecNumber>
    </recommendedName>
    <alternativeName>
        <fullName evidence="1">D-mannonate hydro-lyase</fullName>
    </alternativeName>
</protein>
<keyword id="KW-0408">Iron</keyword>
<keyword id="KW-0456">Lyase</keyword>
<keyword id="KW-0464">Manganese</keyword>
<keyword id="KW-1185">Reference proteome</keyword>
<evidence type="ECO:0000255" key="1">
    <source>
        <dbReference type="HAMAP-Rule" id="MF_00106"/>
    </source>
</evidence>
<feature type="chain" id="PRO_1000034335" description="Mannonate dehydratase">
    <location>
        <begin position="1"/>
        <end position="394"/>
    </location>
</feature>
<sequence>MEQTWRWYGPNDPVSLNDIRQAGATGIVNGLHDIPNGQVWGKKAILARKEIIEGSSLTWSVVESVPVHEEIKTRTGNYATWIENYKQTLINLAECGIDTVCYNFMPVLDWTRTDLEFEMEDGSRALRFDQIAFAAFELHILKRPNAENDYSADEQLQAKVYFDNMSEAQIAKLTANIIAGLPGAEEGYTLEEFQAQLDRYKDIDKETLRNNLAFFLKELMPICESYGLKLAIHPDDPPRPILGLPRVVSTIDDINWLTTQVPEKMNGITMCTGSYGVRGDNDLVNMIKQHGDRIYFTHLRSTQREKNQKSFHEAAHLGGDVDMYNVVMELLREEQRREKSGNIRLIPMRPDHGHQMLDDLKKKTNPGYSAIGRLKGLAEVRGLEVGLKRAFFNK</sequence>
<comment type="function">
    <text evidence="1">Catalyzes the dehydration of D-mannonate.</text>
</comment>
<comment type="catalytic activity">
    <reaction evidence="1">
        <text>D-mannonate = 2-dehydro-3-deoxy-D-gluconate + H2O</text>
        <dbReference type="Rhea" id="RHEA:20097"/>
        <dbReference type="ChEBI" id="CHEBI:15377"/>
        <dbReference type="ChEBI" id="CHEBI:17767"/>
        <dbReference type="ChEBI" id="CHEBI:57990"/>
        <dbReference type="EC" id="4.2.1.8"/>
    </reaction>
</comment>
<comment type="cofactor">
    <cofactor evidence="1">
        <name>Fe(2+)</name>
        <dbReference type="ChEBI" id="CHEBI:29033"/>
    </cofactor>
    <cofactor evidence="1">
        <name>Mn(2+)</name>
        <dbReference type="ChEBI" id="CHEBI:29035"/>
    </cofactor>
</comment>
<comment type="pathway">
    <text evidence="1">Carbohydrate metabolism; pentose and glucuronate interconversion.</text>
</comment>
<comment type="similarity">
    <text evidence="1">Belongs to the mannonate dehydratase family.</text>
</comment>
<accession>A1SR92</accession>
<name>UXUA_PSYIN</name>
<reference key="1">
    <citation type="journal article" date="2008" name="BMC Genomics">
        <title>Genomics of an extreme psychrophile, Psychromonas ingrahamii.</title>
        <authorList>
            <person name="Riley M."/>
            <person name="Staley J.T."/>
            <person name="Danchin A."/>
            <person name="Wang T.Z."/>
            <person name="Brettin T.S."/>
            <person name="Hauser L.J."/>
            <person name="Land M.L."/>
            <person name="Thompson L.S."/>
        </authorList>
    </citation>
    <scope>NUCLEOTIDE SEQUENCE [LARGE SCALE GENOMIC DNA]</scope>
    <source>
        <strain>DSM 17664 / CCUG 51855 / 37</strain>
    </source>
</reference>
<organism>
    <name type="scientific">Psychromonas ingrahamii (strain DSM 17664 / CCUG 51855 / 37)</name>
    <dbReference type="NCBI Taxonomy" id="357804"/>
    <lineage>
        <taxon>Bacteria</taxon>
        <taxon>Pseudomonadati</taxon>
        <taxon>Pseudomonadota</taxon>
        <taxon>Gammaproteobacteria</taxon>
        <taxon>Alteromonadales</taxon>
        <taxon>Psychromonadaceae</taxon>
        <taxon>Psychromonas</taxon>
    </lineage>
</organism>
<gene>
    <name evidence="1" type="primary">uxuA</name>
    <name type="ordered locus">Ping_0136</name>
</gene>